<proteinExistence type="evidence at transcript level"/>
<name>ECP63_ARATH</name>
<organism>
    <name type="scientific">Arabidopsis thaliana</name>
    <name type="common">Mouse-ear cress</name>
    <dbReference type="NCBI Taxonomy" id="3702"/>
    <lineage>
        <taxon>Eukaryota</taxon>
        <taxon>Viridiplantae</taxon>
        <taxon>Streptophyta</taxon>
        <taxon>Embryophyta</taxon>
        <taxon>Tracheophyta</taxon>
        <taxon>Spermatophyta</taxon>
        <taxon>Magnoliopsida</taxon>
        <taxon>eudicotyledons</taxon>
        <taxon>Gunneridae</taxon>
        <taxon>Pentapetalae</taxon>
        <taxon>rosids</taxon>
        <taxon>malvids</taxon>
        <taxon>Brassicales</taxon>
        <taxon>Brassicaceae</taxon>
        <taxon>Camelineae</taxon>
        <taxon>Arabidopsis</taxon>
    </lineage>
</organism>
<evidence type="ECO:0000255" key="1"/>
<evidence type="ECO:0000256" key="2">
    <source>
        <dbReference type="SAM" id="MobiDB-lite"/>
    </source>
</evidence>
<evidence type="ECO:0000269" key="3">
    <source>
    </source>
</evidence>
<evidence type="ECO:0000269" key="4">
    <source>
    </source>
</evidence>
<evidence type="ECO:0000303" key="5">
    <source>
    </source>
</evidence>
<evidence type="ECO:0000305" key="6"/>
<evidence type="ECO:0000312" key="7">
    <source>
        <dbReference type="Araport" id="AT2G36640"/>
    </source>
</evidence>
<dbReference type="EMBL" id="D64140">
    <property type="protein sequence ID" value="BAA11017.1"/>
    <property type="molecule type" value="mRNA"/>
</dbReference>
<dbReference type="EMBL" id="AC006282">
    <property type="protein sequence ID" value="AAD20140.1"/>
    <property type="molecule type" value="Genomic_DNA"/>
</dbReference>
<dbReference type="EMBL" id="CP002685">
    <property type="protein sequence ID" value="AEC09277.1"/>
    <property type="molecule type" value="Genomic_DNA"/>
</dbReference>
<dbReference type="EMBL" id="AK118375">
    <property type="protein sequence ID" value="BAC42987.1"/>
    <property type="molecule type" value="mRNA"/>
</dbReference>
<dbReference type="EMBL" id="BT003672">
    <property type="protein sequence ID" value="AAO39900.1"/>
    <property type="molecule type" value="mRNA"/>
</dbReference>
<dbReference type="PIR" id="H84782">
    <property type="entry name" value="H84782"/>
</dbReference>
<dbReference type="PIR" id="JC6171">
    <property type="entry name" value="JC6171"/>
</dbReference>
<dbReference type="RefSeq" id="NP_181202.1">
    <property type="nucleotide sequence ID" value="NM_129219.3"/>
</dbReference>
<dbReference type="SMR" id="Q9SKP0"/>
<dbReference type="FunCoup" id="Q9SKP0">
    <property type="interactions" value="52"/>
</dbReference>
<dbReference type="STRING" id="3702.Q9SKP0"/>
<dbReference type="PaxDb" id="3702-AT2G36640.1"/>
<dbReference type="ProteomicsDB" id="247057"/>
<dbReference type="EnsemblPlants" id="AT2G36640.1">
    <property type="protein sequence ID" value="AT2G36640.1"/>
    <property type="gene ID" value="AT2G36640"/>
</dbReference>
<dbReference type="GeneID" id="818236"/>
<dbReference type="Gramene" id="AT2G36640.1">
    <property type="protein sequence ID" value="AT2G36640.1"/>
    <property type="gene ID" value="AT2G36640"/>
</dbReference>
<dbReference type="KEGG" id="ath:AT2G36640"/>
<dbReference type="Araport" id="AT2G36640"/>
<dbReference type="TAIR" id="AT2G36640">
    <property type="gene designation" value="ECP63"/>
</dbReference>
<dbReference type="eggNOG" id="ENOG502R2QW">
    <property type="taxonomic scope" value="Eukaryota"/>
</dbReference>
<dbReference type="HOGENOM" id="CLU_058121_0_0_1"/>
<dbReference type="InParanoid" id="Q9SKP0"/>
<dbReference type="OMA" id="NKGREMK"/>
<dbReference type="PhylomeDB" id="Q9SKP0"/>
<dbReference type="PRO" id="PR:Q9SKP0"/>
<dbReference type="Proteomes" id="UP000006548">
    <property type="component" value="Chromosome 2"/>
</dbReference>
<dbReference type="ExpressionAtlas" id="Q9SKP0">
    <property type="expression patterns" value="baseline and differential"/>
</dbReference>
<dbReference type="GO" id="GO:0005829">
    <property type="term" value="C:cytosol"/>
    <property type="evidence" value="ECO:0007005"/>
    <property type="project" value="TAIR"/>
</dbReference>
<dbReference type="Gene3D" id="6.10.140.1430">
    <property type="match status" value="4"/>
</dbReference>
<dbReference type="InterPro" id="IPR004238">
    <property type="entry name" value="ECP63-like_dom"/>
</dbReference>
<dbReference type="PANTHER" id="PTHR47877">
    <property type="entry name" value="LATE EMBRYOGENESIS ABUNDANT DOMAIN-CONTAINING PROTEIN / LEA DOMAIN-CONTAINING PROTEIN"/>
    <property type="match status" value="1"/>
</dbReference>
<dbReference type="PANTHER" id="PTHR47877:SF4">
    <property type="entry name" value="LATE EMBRYOGENESIS ABUNDANT PROTEIN ECP63"/>
    <property type="match status" value="1"/>
</dbReference>
<dbReference type="Pfam" id="PF02987">
    <property type="entry name" value="LEA_4"/>
    <property type="match status" value="3"/>
</dbReference>
<keyword id="KW-0175">Coiled coil</keyword>
<keyword id="KW-1185">Reference proteome</keyword>
<comment type="function">
    <text evidence="3">May be involved in the BHLH109-mediated regulation of somatic embryogenesis.</text>
</comment>
<comment type="tissue specificity">
    <text evidence="4">Expressed in mature seeds.</text>
</comment>
<comment type="developmental stage">
    <text evidence="3">Expressed during somatic embryogenesis.</text>
</comment>
<comment type="induction">
    <text evidence="4">By abscisic acid (ABA) in immature siliques.</text>
</comment>
<comment type="similarity">
    <text evidence="6">Belongs to the LEA type 4 family.</text>
</comment>
<sequence length="448" mass="48493">MASDKQKAERAEVAARLAAEDLHDINKSGGADVTMYKVTERTTEHPPEQDRPGVIGSVFRAVQGTYEHARDAVVGKTHEAAESTKEGAQIASEKAVGAKDATVEKAKETADYTAEKVGEYKDYTVDKAKEAKDTTAEKAKETANYTADKAVEAKDKTAEKIGEYKDYAVDKAVEAKDKTAEKAKETANYTADKAKEAKDKTAEKVGEYKDYTVDKAVEARDYTAEKAIEAKDKTAEKTGEYKDYTVEKATEGKDVTVSKLGELKDSAVETAKRAMGFLSGKTEEAKGKAVETKDTAKENMEKAGEVTRQKMEEMRLEGKELKEEAGAKAQEASQKTRESTESGAQKAEETKDSAAVRGNEAKGTIFGALGNVTEAIKSKLTMPSDIVEETRAAREHGGTGRTVVEVKVEDSKPGKVATSLKASDQMTGQTFNDVGRMDDDARKDKGKL</sequence>
<protein>
    <recommendedName>
        <fullName evidence="6">Late embryogenesis abundant protein ECP63</fullName>
    </recommendedName>
    <alternativeName>
        <fullName evidence="6">Embryonic cell protein 63</fullName>
        <shortName evidence="5">AtECP63</shortName>
    </alternativeName>
    <alternativeName>
        <fullName evidence="6">LEA domain-containing protein ECP63</fullName>
    </alternativeName>
</protein>
<feature type="chain" id="PRO_0000438826" description="Late embryogenesis abundant protein ECP63">
    <location>
        <begin position="1"/>
        <end position="448"/>
    </location>
</feature>
<feature type="region of interest" description="Disordered" evidence="2">
    <location>
        <begin position="282"/>
        <end position="360"/>
    </location>
</feature>
<feature type="region of interest" description="Disordered" evidence="2">
    <location>
        <begin position="411"/>
        <end position="448"/>
    </location>
</feature>
<feature type="coiled-coil region" evidence="1">
    <location>
        <begin position="297"/>
        <end position="331"/>
    </location>
</feature>
<feature type="compositionally biased region" description="Basic and acidic residues" evidence="2">
    <location>
        <begin position="282"/>
        <end position="326"/>
    </location>
</feature>
<feature type="compositionally biased region" description="Basic and acidic residues" evidence="2">
    <location>
        <begin position="334"/>
        <end position="354"/>
    </location>
</feature>
<feature type="compositionally biased region" description="Polar residues" evidence="2">
    <location>
        <begin position="420"/>
        <end position="432"/>
    </location>
</feature>
<feature type="compositionally biased region" description="Basic and acidic residues" evidence="2">
    <location>
        <begin position="435"/>
        <end position="448"/>
    </location>
</feature>
<feature type="sequence conflict" description="In Ref. 1; BAA11017." evidence="6" ref="1">
    <original>A</original>
    <variation>S</variation>
    <location>
        <position position="187"/>
    </location>
</feature>
<feature type="sequence conflict" description="In Ref. 1; BAA11017." evidence="6" ref="1">
    <original>A</original>
    <variation>P</variation>
    <location>
        <position position="354"/>
    </location>
</feature>
<gene>
    <name evidence="5" type="primary">ECP63</name>
    <name evidence="7" type="ordered locus">At2g36640</name>
</gene>
<reference key="1">
    <citation type="journal article" date="1997" name="Gene">
        <title>Arabidopsis thaliana ECP63 encoding a LEA protein is located in chromosome 4.</title>
        <authorList>
            <person name="Yang H."/>
            <person name="Saitou T."/>
            <person name="Komeda Y."/>
            <person name="Harada H."/>
            <person name="Kamada H."/>
        </authorList>
    </citation>
    <scope>NUCLEOTIDE SEQUENCE [MRNA]</scope>
    <scope>TISSUE SPECIFICITY</scope>
    <scope>INDUCTION BY ABSCISIC ACID</scope>
    <source>
        <strain>cv. Columbia</strain>
        <tissue>Dry seed</tissue>
    </source>
</reference>
<reference key="2">
    <citation type="journal article" date="1999" name="Nature">
        <title>Sequence and analysis of chromosome 2 of the plant Arabidopsis thaliana.</title>
        <authorList>
            <person name="Lin X."/>
            <person name="Kaul S."/>
            <person name="Rounsley S.D."/>
            <person name="Shea T.P."/>
            <person name="Benito M.-I."/>
            <person name="Town C.D."/>
            <person name="Fujii C.Y."/>
            <person name="Mason T.M."/>
            <person name="Bowman C.L."/>
            <person name="Barnstead M.E."/>
            <person name="Feldblyum T.V."/>
            <person name="Buell C.R."/>
            <person name="Ketchum K.A."/>
            <person name="Lee J.J."/>
            <person name="Ronning C.M."/>
            <person name="Koo H.L."/>
            <person name="Moffat K.S."/>
            <person name="Cronin L.A."/>
            <person name="Shen M."/>
            <person name="Pai G."/>
            <person name="Van Aken S."/>
            <person name="Umayam L."/>
            <person name="Tallon L.J."/>
            <person name="Gill J.E."/>
            <person name="Adams M.D."/>
            <person name="Carrera A.J."/>
            <person name="Creasy T.H."/>
            <person name="Goodman H.M."/>
            <person name="Somerville C.R."/>
            <person name="Copenhaver G.P."/>
            <person name="Preuss D."/>
            <person name="Nierman W.C."/>
            <person name="White O."/>
            <person name="Eisen J.A."/>
            <person name="Salzberg S.L."/>
            <person name="Fraser C.M."/>
            <person name="Venter J.C."/>
        </authorList>
    </citation>
    <scope>NUCLEOTIDE SEQUENCE [LARGE SCALE GENOMIC DNA]</scope>
    <source>
        <strain>cv. Columbia</strain>
    </source>
</reference>
<reference key="3">
    <citation type="journal article" date="2017" name="Plant J.">
        <title>Araport11: a complete reannotation of the Arabidopsis thaliana reference genome.</title>
        <authorList>
            <person name="Cheng C.Y."/>
            <person name="Krishnakumar V."/>
            <person name="Chan A.P."/>
            <person name="Thibaud-Nissen F."/>
            <person name="Schobel S."/>
            <person name="Town C.D."/>
        </authorList>
    </citation>
    <scope>GENOME REANNOTATION</scope>
    <source>
        <strain>cv. Columbia</strain>
    </source>
</reference>
<reference key="4">
    <citation type="journal article" date="2002" name="Science">
        <title>Functional annotation of a full-length Arabidopsis cDNA collection.</title>
        <authorList>
            <person name="Seki M."/>
            <person name="Narusaka M."/>
            <person name="Kamiya A."/>
            <person name="Ishida J."/>
            <person name="Satou M."/>
            <person name="Sakurai T."/>
            <person name="Nakajima M."/>
            <person name="Enju A."/>
            <person name="Akiyama K."/>
            <person name="Oono Y."/>
            <person name="Muramatsu M."/>
            <person name="Hayashizaki Y."/>
            <person name="Kawai J."/>
            <person name="Carninci P."/>
            <person name="Itoh M."/>
            <person name="Ishii Y."/>
            <person name="Arakawa T."/>
            <person name="Shibata K."/>
            <person name="Shinagawa A."/>
            <person name="Shinozaki K."/>
        </authorList>
    </citation>
    <scope>NUCLEOTIDE SEQUENCE [LARGE SCALE MRNA] OF 300-448</scope>
    <source>
        <strain>cv. Columbia</strain>
    </source>
</reference>
<reference key="5">
    <citation type="journal article" date="2003" name="Science">
        <title>Empirical analysis of transcriptional activity in the Arabidopsis genome.</title>
        <authorList>
            <person name="Yamada K."/>
            <person name="Lim J."/>
            <person name="Dale J.M."/>
            <person name="Chen H."/>
            <person name="Shinn P."/>
            <person name="Palm C.J."/>
            <person name="Southwick A.M."/>
            <person name="Wu H.C."/>
            <person name="Kim C.J."/>
            <person name="Nguyen M."/>
            <person name="Pham P.K."/>
            <person name="Cheuk R.F."/>
            <person name="Karlin-Newmann G."/>
            <person name="Liu S.X."/>
            <person name="Lam B."/>
            <person name="Sakano H."/>
            <person name="Wu T."/>
            <person name="Yu G."/>
            <person name="Miranda M."/>
            <person name="Quach H.L."/>
            <person name="Tripp M."/>
            <person name="Chang C.H."/>
            <person name="Lee J.M."/>
            <person name="Toriumi M.J."/>
            <person name="Chan M.M."/>
            <person name="Tang C.C."/>
            <person name="Onodera C.S."/>
            <person name="Deng J.M."/>
            <person name="Akiyama K."/>
            <person name="Ansari Y."/>
            <person name="Arakawa T."/>
            <person name="Banh J."/>
            <person name="Banno F."/>
            <person name="Bowser L."/>
            <person name="Brooks S.Y."/>
            <person name="Carninci P."/>
            <person name="Chao Q."/>
            <person name="Choy N."/>
            <person name="Enju A."/>
            <person name="Goldsmith A.D."/>
            <person name="Gurjal M."/>
            <person name="Hansen N.F."/>
            <person name="Hayashizaki Y."/>
            <person name="Johnson-Hopson C."/>
            <person name="Hsuan V.W."/>
            <person name="Iida K."/>
            <person name="Karnes M."/>
            <person name="Khan S."/>
            <person name="Koesema E."/>
            <person name="Ishida J."/>
            <person name="Jiang P.X."/>
            <person name="Jones T."/>
            <person name="Kawai J."/>
            <person name="Kamiya A."/>
            <person name="Meyers C."/>
            <person name="Nakajima M."/>
            <person name="Narusaka M."/>
            <person name="Seki M."/>
            <person name="Sakurai T."/>
            <person name="Satou M."/>
            <person name="Tamse R."/>
            <person name="Vaysberg M."/>
            <person name="Wallender E.K."/>
            <person name="Wong C."/>
            <person name="Yamamura Y."/>
            <person name="Yuan S."/>
            <person name="Shinozaki K."/>
            <person name="Davis R.W."/>
            <person name="Theologis A."/>
            <person name="Ecker J.R."/>
        </authorList>
    </citation>
    <scope>NUCLEOTIDE SEQUENCE [LARGE SCALE MRNA] OF 300-448</scope>
    <source>
        <strain>cv. Columbia</strain>
    </source>
</reference>
<reference key="6">
    <citation type="journal article" date="2016" name="J. Plant Physiol.">
        <title>Stress-related function of bHLH109 in somatic embryo induction in Arabidopsis.</title>
        <authorList>
            <person name="Nowak K."/>
            <person name="Gaj M.D."/>
        </authorList>
    </citation>
    <scope>FUNCTION</scope>
    <scope>DEVELOPMENTAL STAGE</scope>
</reference>
<accession>Q9SKP0</accession>
<accession>Q8GX85</accession>
<accession>Q96246</accession>